<dbReference type="EC" id="3.6.-.-" evidence="1"/>
<dbReference type="EMBL" id="AE000657">
    <property type="protein sequence ID" value="AAC06992.1"/>
    <property type="molecule type" value="Genomic_DNA"/>
</dbReference>
<dbReference type="PIR" id="C70375">
    <property type="entry name" value="C70375"/>
</dbReference>
<dbReference type="RefSeq" id="NP_213591.1">
    <property type="nucleotide sequence ID" value="NC_000918.1"/>
</dbReference>
<dbReference type="RefSeq" id="WP_010880529.1">
    <property type="nucleotide sequence ID" value="NC_000918.1"/>
</dbReference>
<dbReference type="SMR" id="O67030"/>
<dbReference type="DIP" id="DIP-48312N"/>
<dbReference type="FunCoup" id="O67030">
    <property type="interactions" value="459"/>
</dbReference>
<dbReference type="STRING" id="224324.aq_871"/>
<dbReference type="EnsemblBacteria" id="AAC06992">
    <property type="protein sequence ID" value="AAC06992"/>
    <property type="gene ID" value="aq_871"/>
</dbReference>
<dbReference type="KEGG" id="aae:aq_871"/>
<dbReference type="PATRIC" id="fig|224324.8.peg.679"/>
<dbReference type="eggNOG" id="COG0486">
    <property type="taxonomic scope" value="Bacteria"/>
</dbReference>
<dbReference type="HOGENOM" id="CLU_019624_4_1_0"/>
<dbReference type="InParanoid" id="O67030"/>
<dbReference type="OrthoDB" id="9805918at2"/>
<dbReference type="Proteomes" id="UP000000798">
    <property type="component" value="Chromosome"/>
</dbReference>
<dbReference type="GO" id="GO:0005737">
    <property type="term" value="C:cytoplasm"/>
    <property type="evidence" value="ECO:0000318"/>
    <property type="project" value="GO_Central"/>
</dbReference>
<dbReference type="GO" id="GO:0005829">
    <property type="term" value="C:cytosol"/>
    <property type="evidence" value="ECO:0000318"/>
    <property type="project" value="GO_Central"/>
</dbReference>
<dbReference type="GO" id="GO:0005525">
    <property type="term" value="F:GTP binding"/>
    <property type="evidence" value="ECO:0007669"/>
    <property type="project" value="UniProtKB-UniRule"/>
</dbReference>
<dbReference type="GO" id="GO:0003924">
    <property type="term" value="F:GTPase activity"/>
    <property type="evidence" value="ECO:0007669"/>
    <property type="project" value="UniProtKB-UniRule"/>
</dbReference>
<dbReference type="GO" id="GO:0046872">
    <property type="term" value="F:metal ion binding"/>
    <property type="evidence" value="ECO:0007669"/>
    <property type="project" value="UniProtKB-KW"/>
</dbReference>
<dbReference type="GO" id="GO:0030488">
    <property type="term" value="P:tRNA methylation"/>
    <property type="evidence" value="ECO:0000318"/>
    <property type="project" value="GO_Central"/>
</dbReference>
<dbReference type="GO" id="GO:0002098">
    <property type="term" value="P:tRNA wobble uridine modification"/>
    <property type="evidence" value="ECO:0000318"/>
    <property type="project" value="GO_Central"/>
</dbReference>
<dbReference type="CDD" id="cd04164">
    <property type="entry name" value="trmE"/>
    <property type="match status" value="1"/>
</dbReference>
<dbReference type="CDD" id="cd14858">
    <property type="entry name" value="TrmE_N"/>
    <property type="match status" value="1"/>
</dbReference>
<dbReference type="FunFam" id="3.30.1360.120:FF:000003">
    <property type="entry name" value="tRNA modification GTPase MnmE"/>
    <property type="match status" value="1"/>
</dbReference>
<dbReference type="FunFam" id="3.40.50.300:FF:000494">
    <property type="entry name" value="tRNA modification GTPase MnmE"/>
    <property type="match status" value="1"/>
</dbReference>
<dbReference type="Gene3D" id="3.40.50.300">
    <property type="entry name" value="P-loop containing nucleotide triphosphate hydrolases"/>
    <property type="match status" value="1"/>
</dbReference>
<dbReference type="Gene3D" id="3.30.1360.120">
    <property type="entry name" value="Probable tRNA modification gtpase trme, domain 1"/>
    <property type="match status" value="1"/>
</dbReference>
<dbReference type="Gene3D" id="1.20.120.430">
    <property type="entry name" value="tRNA modification GTPase MnmE domain 2"/>
    <property type="match status" value="1"/>
</dbReference>
<dbReference type="HAMAP" id="MF_00379">
    <property type="entry name" value="GTPase_MnmE"/>
    <property type="match status" value="1"/>
</dbReference>
<dbReference type="InterPro" id="IPR031168">
    <property type="entry name" value="G_TrmE"/>
</dbReference>
<dbReference type="InterPro" id="IPR006073">
    <property type="entry name" value="GTP-bd"/>
</dbReference>
<dbReference type="InterPro" id="IPR018948">
    <property type="entry name" value="GTP-bd_TrmE_N"/>
</dbReference>
<dbReference type="InterPro" id="IPR004520">
    <property type="entry name" value="GTPase_MnmE"/>
</dbReference>
<dbReference type="InterPro" id="IPR027368">
    <property type="entry name" value="MnmE_dom2"/>
</dbReference>
<dbReference type="InterPro" id="IPR025867">
    <property type="entry name" value="MnmE_helical"/>
</dbReference>
<dbReference type="InterPro" id="IPR027417">
    <property type="entry name" value="P-loop_NTPase"/>
</dbReference>
<dbReference type="InterPro" id="IPR005225">
    <property type="entry name" value="Small_GTP-bd"/>
</dbReference>
<dbReference type="InterPro" id="IPR027266">
    <property type="entry name" value="TrmE/GcvT_dom1"/>
</dbReference>
<dbReference type="NCBIfam" id="TIGR00450">
    <property type="entry name" value="mnmE_trmE_thdF"/>
    <property type="match status" value="1"/>
</dbReference>
<dbReference type="NCBIfam" id="NF003661">
    <property type="entry name" value="PRK05291.1-3"/>
    <property type="match status" value="1"/>
</dbReference>
<dbReference type="NCBIfam" id="TIGR00231">
    <property type="entry name" value="small_GTP"/>
    <property type="match status" value="1"/>
</dbReference>
<dbReference type="PANTHER" id="PTHR42714">
    <property type="entry name" value="TRNA MODIFICATION GTPASE GTPBP3"/>
    <property type="match status" value="1"/>
</dbReference>
<dbReference type="PANTHER" id="PTHR42714:SF2">
    <property type="entry name" value="TRNA MODIFICATION GTPASE GTPBP3, MITOCHONDRIAL"/>
    <property type="match status" value="1"/>
</dbReference>
<dbReference type="Pfam" id="PF01926">
    <property type="entry name" value="MMR_HSR1"/>
    <property type="match status" value="1"/>
</dbReference>
<dbReference type="Pfam" id="PF12631">
    <property type="entry name" value="MnmE_helical"/>
    <property type="match status" value="1"/>
</dbReference>
<dbReference type="Pfam" id="PF10396">
    <property type="entry name" value="TrmE_N"/>
    <property type="match status" value="1"/>
</dbReference>
<dbReference type="PRINTS" id="PR00326">
    <property type="entry name" value="GTP1OBG"/>
</dbReference>
<dbReference type="SUPFAM" id="SSF52540">
    <property type="entry name" value="P-loop containing nucleoside triphosphate hydrolases"/>
    <property type="match status" value="1"/>
</dbReference>
<dbReference type="PROSITE" id="PS51709">
    <property type="entry name" value="G_TRME"/>
    <property type="match status" value="1"/>
</dbReference>
<name>MNME_AQUAE</name>
<keyword id="KW-0963">Cytoplasm</keyword>
<keyword id="KW-0342">GTP-binding</keyword>
<keyword id="KW-0378">Hydrolase</keyword>
<keyword id="KW-0460">Magnesium</keyword>
<keyword id="KW-0479">Metal-binding</keyword>
<keyword id="KW-0547">Nucleotide-binding</keyword>
<keyword id="KW-0630">Potassium</keyword>
<keyword id="KW-1185">Reference proteome</keyword>
<keyword id="KW-0819">tRNA processing</keyword>
<organism>
    <name type="scientific">Aquifex aeolicus (strain VF5)</name>
    <dbReference type="NCBI Taxonomy" id="224324"/>
    <lineage>
        <taxon>Bacteria</taxon>
        <taxon>Pseudomonadati</taxon>
        <taxon>Aquificota</taxon>
        <taxon>Aquificia</taxon>
        <taxon>Aquificales</taxon>
        <taxon>Aquificaceae</taxon>
        <taxon>Aquifex</taxon>
    </lineage>
</organism>
<sequence length="448" mass="50304">MREPIVAIATPYGESAIGIVRLSGKGVLDLVKKFFKTKREIKPRYAHFGVLYDDKGEELDEGVLIYYKAPHSYTGEDMVELNLHGNPRILKRALELFVNAGARLAEPGEFTKRAFLNGKLDLTQAEAVAELISAKTELARKVALKQLHGELSKHIRPLRETLLELLAYVEADIEFAEEDIPTLTKEQVIQMVDKVIEGINELLKTAKTGKFIREGVKLAIVGRPNVGKSSLFNALLKEERAIVTDIAGTTRDFIEETLQIKGVPVRLVDTAGIRETKDLVERIGVERSKQKVKEADLILFVIDASQEITEEDLRIYEEIKEKDHIVVANKVDLGIRANLEKFKGEKIVKVSALKGTGLEELSEEILKKVGANLEESVNIYISVRHETLLKKAKEVLERFKEEFREKDISPEIAMLDLREASDYLGEILGEITTEDLLGKIFSTFCIGK</sequence>
<gene>
    <name evidence="1" type="primary">mnmE</name>
    <name evidence="1" type="synonym">thdF</name>
    <name evidence="1" type="synonym">trmE</name>
    <name type="ordered locus">aq_871</name>
</gene>
<reference key="1">
    <citation type="journal article" date="1998" name="Nature">
        <title>The complete genome of the hyperthermophilic bacterium Aquifex aeolicus.</title>
        <authorList>
            <person name="Deckert G."/>
            <person name="Warren P.V."/>
            <person name="Gaasterland T."/>
            <person name="Young W.G."/>
            <person name="Lenox A.L."/>
            <person name="Graham D.E."/>
            <person name="Overbeek R."/>
            <person name="Snead M.A."/>
            <person name="Keller M."/>
            <person name="Aujay M."/>
            <person name="Huber R."/>
            <person name="Feldman R.A."/>
            <person name="Short J.M."/>
            <person name="Olsen G.J."/>
            <person name="Swanson R.V."/>
        </authorList>
    </citation>
    <scope>NUCLEOTIDE SEQUENCE [LARGE SCALE GENOMIC DNA]</scope>
    <source>
        <strain>VF5</strain>
    </source>
</reference>
<proteinExistence type="inferred from homology"/>
<feature type="chain" id="PRO_0000188846" description="tRNA modification GTPase MnmE">
    <location>
        <begin position="1"/>
        <end position="448"/>
    </location>
</feature>
<feature type="domain" description="TrmE-type G">
    <location>
        <begin position="215"/>
        <end position="370"/>
    </location>
</feature>
<feature type="binding site" evidence="1">
    <location>
        <position position="21"/>
    </location>
    <ligand>
        <name>(6S)-5-formyl-5,6,7,8-tetrahydrofolate</name>
        <dbReference type="ChEBI" id="CHEBI:57457"/>
    </ligand>
</feature>
<feature type="binding site" evidence="1">
    <location>
        <position position="80"/>
    </location>
    <ligand>
        <name>(6S)-5-formyl-5,6,7,8-tetrahydrofolate</name>
        <dbReference type="ChEBI" id="CHEBI:57457"/>
    </ligand>
</feature>
<feature type="binding site" evidence="1">
    <location>
        <position position="119"/>
    </location>
    <ligand>
        <name>(6S)-5-formyl-5,6,7,8-tetrahydrofolate</name>
        <dbReference type="ChEBI" id="CHEBI:57457"/>
    </ligand>
</feature>
<feature type="binding site" evidence="1">
    <location>
        <begin position="225"/>
        <end position="230"/>
    </location>
    <ligand>
        <name>GTP</name>
        <dbReference type="ChEBI" id="CHEBI:37565"/>
    </ligand>
</feature>
<feature type="binding site" evidence="1">
    <location>
        <position position="225"/>
    </location>
    <ligand>
        <name>K(+)</name>
        <dbReference type="ChEBI" id="CHEBI:29103"/>
    </ligand>
</feature>
<feature type="binding site" evidence="1">
    <location>
        <position position="229"/>
    </location>
    <ligand>
        <name>Mg(2+)</name>
        <dbReference type="ChEBI" id="CHEBI:18420"/>
    </ligand>
</feature>
<feature type="binding site" evidence="1">
    <location>
        <begin position="244"/>
        <end position="250"/>
    </location>
    <ligand>
        <name>GTP</name>
        <dbReference type="ChEBI" id="CHEBI:37565"/>
    </ligand>
</feature>
<feature type="binding site" evidence="1">
    <location>
        <position position="244"/>
    </location>
    <ligand>
        <name>K(+)</name>
        <dbReference type="ChEBI" id="CHEBI:29103"/>
    </ligand>
</feature>
<feature type="binding site" evidence="1">
    <location>
        <position position="246"/>
    </location>
    <ligand>
        <name>K(+)</name>
        <dbReference type="ChEBI" id="CHEBI:29103"/>
    </ligand>
</feature>
<feature type="binding site" evidence="1">
    <location>
        <position position="249"/>
    </location>
    <ligand>
        <name>K(+)</name>
        <dbReference type="ChEBI" id="CHEBI:29103"/>
    </ligand>
</feature>
<feature type="binding site" evidence="1">
    <location>
        <position position="250"/>
    </location>
    <ligand>
        <name>Mg(2+)</name>
        <dbReference type="ChEBI" id="CHEBI:18420"/>
    </ligand>
</feature>
<feature type="binding site" evidence="1">
    <location>
        <begin position="269"/>
        <end position="272"/>
    </location>
    <ligand>
        <name>GTP</name>
        <dbReference type="ChEBI" id="CHEBI:37565"/>
    </ligand>
</feature>
<feature type="binding site" evidence="1">
    <location>
        <position position="448"/>
    </location>
    <ligand>
        <name>(6S)-5-formyl-5,6,7,8-tetrahydrofolate</name>
        <dbReference type="ChEBI" id="CHEBI:57457"/>
    </ligand>
</feature>
<evidence type="ECO:0000255" key="1">
    <source>
        <dbReference type="HAMAP-Rule" id="MF_00379"/>
    </source>
</evidence>
<protein>
    <recommendedName>
        <fullName evidence="1">tRNA modification GTPase MnmE</fullName>
        <ecNumber evidence="1">3.6.-.-</ecNumber>
    </recommendedName>
</protein>
<comment type="function">
    <text evidence="1">Exhibits a very high intrinsic GTPase hydrolysis rate. Involved in the addition of a carboxymethylaminomethyl (cmnm) group at the wobble position (U34) of certain tRNAs, forming tRNA-cmnm(5)s(2)U34.</text>
</comment>
<comment type="cofactor">
    <cofactor evidence="1">
        <name>K(+)</name>
        <dbReference type="ChEBI" id="CHEBI:29103"/>
    </cofactor>
    <text evidence="1">Binds 1 potassium ion per subunit.</text>
</comment>
<comment type="subunit">
    <text evidence="1">Homodimer. Heterotetramer of two MnmE and two MnmG subunits.</text>
</comment>
<comment type="subcellular location">
    <subcellularLocation>
        <location evidence="1">Cytoplasm</location>
    </subcellularLocation>
</comment>
<comment type="similarity">
    <text evidence="1">Belongs to the TRAFAC class TrmE-Era-EngA-EngB-Septin-like GTPase superfamily. TrmE GTPase family.</text>
</comment>
<accession>O67030</accession>